<name>MIAB_ECOLI</name>
<gene>
    <name evidence="2 6" type="primary">miaB</name>
    <name type="synonym">yleA</name>
    <name type="ordered locus">b0661</name>
    <name type="ordered locus">JW0658</name>
</gene>
<organism>
    <name type="scientific">Escherichia coli (strain K12)</name>
    <dbReference type="NCBI Taxonomy" id="83333"/>
    <lineage>
        <taxon>Bacteria</taxon>
        <taxon>Pseudomonadati</taxon>
        <taxon>Pseudomonadota</taxon>
        <taxon>Gammaproteobacteria</taxon>
        <taxon>Enterobacterales</taxon>
        <taxon>Enterobacteriaceae</taxon>
        <taxon>Escherichia</taxon>
    </lineage>
</organism>
<protein>
    <recommendedName>
        <fullName evidence="2">tRNA-2-methylthio-N(6)-dimethylallyladenosine synthase</fullName>
        <ecNumber evidence="2 8">2.8.4.3</ecNumber>
    </recommendedName>
    <alternativeName>
        <fullName evidence="2">(Dimethylallyl)adenosine tRNA methylthiotransferase MiaB</fullName>
    </alternativeName>
    <alternativeName>
        <fullName evidence="2">tRNA-i(6)A37 methylthiotransferase</fullName>
    </alternativeName>
</protein>
<evidence type="ECO:0000250" key="1">
    <source>
        <dbReference type="UniProtKB" id="Q9WZC1"/>
    </source>
</evidence>
<evidence type="ECO:0000255" key="2">
    <source>
        <dbReference type="HAMAP-Rule" id="MF_01864"/>
    </source>
</evidence>
<evidence type="ECO:0000255" key="3">
    <source>
        <dbReference type="PROSITE-ProRule" id="PRU01266"/>
    </source>
</evidence>
<evidence type="ECO:0000269" key="4">
    <source>
    </source>
</evidence>
<evidence type="ECO:0000269" key="5">
    <source>
    </source>
</evidence>
<evidence type="ECO:0000303" key="6">
    <source>
    </source>
</evidence>
<evidence type="ECO:0000305" key="7"/>
<evidence type="ECO:0000305" key="8">
    <source>
    </source>
</evidence>
<evidence type="ECO:0000305" key="9">
    <source>
    </source>
</evidence>
<keyword id="KW-0004">4Fe-4S</keyword>
<keyword id="KW-0963">Cytoplasm</keyword>
<keyword id="KW-0408">Iron</keyword>
<keyword id="KW-0411">Iron-sulfur</keyword>
<keyword id="KW-0479">Metal-binding</keyword>
<keyword id="KW-1185">Reference proteome</keyword>
<keyword id="KW-0949">S-adenosyl-L-methionine</keyword>
<keyword id="KW-0808">Transferase</keyword>
<keyword id="KW-0819">tRNA processing</keyword>
<sequence>MTKKLHIKTWGCQMNEYDSSKMADLLDATHGYQLTDVAEEADVLLLNTCSIREKAQEKVFHQLGRWKLLKEKNPDLIIGVGGCVASQEGEHIRQRAHYVDIIFGPQTLHRLPEMINSVRGDRSPVVDISFPEIEKFDRLPEPRAEGPTAFVSIMEGCNKYCTYCVVPYTRGEEVSRPSDDILFEIAQLAAQGVREVNLLGQNVNAWRGENYDGTTGSFADLLRLVAAIDGIDRIRFTTSHPIEFTDDIIEVYRDTPELVSFLHLPVQSGSDRILNLMGRTHTALEYKAIIRKLRAARPDIQISSDFIVGFPGETTEDFEKTMKLIADVNFDMSYSFIFSARPGTPAADMVDDVPEEEKKQRLYILQERINQQAMAWSRRMLGTTQRILVEGTSRKSIMELSGRTENNRVVNFEGTPDMIGKFVDVEITDVYPNSLRGKVVRTEDEMGLRVAETPESVIARTRKENDLGVGYYQP</sequence>
<comment type="function">
    <text evidence="2 4">Catalyzes the methylthiolation of N6-(dimethylallyl)adenosine (i(6)A), leading to the formation of 2-methylthio-N6-(dimethylallyl)adenosine (ms(2)i(6)A) at position 37 in tRNAs that read codons beginning with uridine.</text>
</comment>
<comment type="catalytic activity">
    <reaction evidence="2 8">
        <text>N(6)-dimethylallyladenosine(37) in tRNA + (sulfur carrier)-SH + AH2 + 2 S-adenosyl-L-methionine = 2-methylsulfanyl-N(6)-dimethylallyladenosine(37) in tRNA + (sulfur carrier)-H + 5'-deoxyadenosine + L-methionine + A + S-adenosyl-L-homocysteine + 2 H(+)</text>
        <dbReference type="Rhea" id="RHEA:37067"/>
        <dbReference type="Rhea" id="RHEA-COMP:10375"/>
        <dbReference type="Rhea" id="RHEA-COMP:10376"/>
        <dbReference type="Rhea" id="RHEA-COMP:14737"/>
        <dbReference type="Rhea" id="RHEA-COMP:14739"/>
        <dbReference type="ChEBI" id="CHEBI:13193"/>
        <dbReference type="ChEBI" id="CHEBI:15378"/>
        <dbReference type="ChEBI" id="CHEBI:17319"/>
        <dbReference type="ChEBI" id="CHEBI:17499"/>
        <dbReference type="ChEBI" id="CHEBI:29917"/>
        <dbReference type="ChEBI" id="CHEBI:57844"/>
        <dbReference type="ChEBI" id="CHEBI:57856"/>
        <dbReference type="ChEBI" id="CHEBI:59789"/>
        <dbReference type="ChEBI" id="CHEBI:64428"/>
        <dbReference type="ChEBI" id="CHEBI:74415"/>
        <dbReference type="ChEBI" id="CHEBI:74417"/>
        <dbReference type="EC" id="2.8.4.3"/>
    </reaction>
    <physiologicalReaction direction="left-to-right" evidence="8">
        <dbReference type="Rhea" id="RHEA:37068"/>
    </physiologicalReaction>
</comment>
<comment type="catalytic activity">
    <reaction evidence="1">
        <text>N(6)-dimethylallyladenosine(37) in tRNA + (sulfur carrier)-SH + AH2 + S-adenosyl-L-methionine = 2-thio-N(6)-dimethylallyladenosine(37) in tRNA + (sulfur carrier)-H + 5'-deoxyadenosine + L-methionine + A + H(+)</text>
        <dbReference type="Rhea" id="RHEA:36339"/>
        <dbReference type="Rhea" id="RHEA-COMP:10375"/>
        <dbReference type="Rhea" id="RHEA-COMP:10377"/>
        <dbReference type="Rhea" id="RHEA-COMP:14737"/>
        <dbReference type="Rhea" id="RHEA-COMP:14739"/>
        <dbReference type="ChEBI" id="CHEBI:13193"/>
        <dbReference type="ChEBI" id="CHEBI:15378"/>
        <dbReference type="ChEBI" id="CHEBI:17319"/>
        <dbReference type="ChEBI" id="CHEBI:17499"/>
        <dbReference type="ChEBI" id="CHEBI:29917"/>
        <dbReference type="ChEBI" id="CHEBI:57844"/>
        <dbReference type="ChEBI" id="CHEBI:59789"/>
        <dbReference type="ChEBI" id="CHEBI:64428"/>
        <dbReference type="ChEBI" id="CHEBI:74415"/>
        <dbReference type="ChEBI" id="CHEBI:74416"/>
    </reaction>
    <physiologicalReaction direction="left-to-right" evidence="1">
        <dbReference type="Rhea" id="RHEA:36340"/>
    </physiologicalReaction>
</comment>
<comment type="catalytic activity">
    <reaction evidence="1">
        <text>2-thio-N(6)-dimethylallyladenosine(37) in tRNA + S-adenosyl-L-methionine = 2-methylsulfanyl-N(6)-dimethylallyladenosine(37) in tRNA + S-adenosyl-L-homocysteine + H(+)</text>
        <dbReference type="Rhea" id="RHEA:37063"/>
        <dbReference type="Rhea" id="RHEA-COMP:10376"/>
        <dbReference type="Rhea" id="RHEA-COMP:10377"/>
        <dbReference type="ChEBI" id="CHEBI:15378"/>
        <dbReference type="ChEBI" id="CHEBI:57856"/>
        <dbReference type="ChEBI" id="CHEBI:59789"/>
        <dbReference type="ChEBI" id="CHEBI:74416"/>
        <dbReference type="ChEBI" id="CHEBI:74417"/>
    </reaction>
    <physiologicalReaction direction="left-to-right" evidence="1">
        <dbReference type="Rhea" id="RHEA:37064"/>
    </physiologicalReaction>
</comment>
<comment type="cofactor">
    <cofactor evidence="9">
        <name>[4Fe-4S] cluster</name>
        <dbReference type="ChEBI" id="CHEBI:49883"/>
    </cofactor>
    <text evidence="9">Binds 2 [4Fe-4S] clusters. One cluster is coordinated with 3 cysteines and an exchangeable S-adenosyl-L-methionine.</text>
</comment>
<comment type="subunit">
    <text evidence="2 5">Monomer.</text>
</comment>
<comment type="subcellular location">
    <subcellularLocation>
        <location evidence="2">Cytoplasm</location>
    </subcellularLocation>
</comment>
<comment type="similarity">
    <text evidence="2">Belongs to the methylthiotransferase family. MiaB subfamily.</text>
</comment>
<feature type="chain" id="PRO_0000141734" description="tRNA-2-methylthio-N(6)-dimethylallyladenosine synthase">
    <location>
        <begin position="1"/>
        <end position="474"/>
    </location>
</feature>
<feature type="domain" description="MTTase N-terminal" evidence="2">
    <location>
        <begin position="3"/>
        <end position="120"/>
    </location>
</feature>
<feature type="domain" description="Radical SAM core" evidence="3">
    <location>
        <begin position="143"/>
        <end position="375"/>
    </location>
</feature>
<feature type="domain" description="TRAM" evidence="2">
    <location>
        <begin position="378"/>
        <end position="441"/>
    </location>
</feature>
<feature type="binding site" evidence="2">
    <location>
        <position position="12"/>
    </location>
    <ligand>
        <name>[4Fe-4S] cluster</name>
        <dbReference type="ChEBI" id="CHEBI:49883"/>
        <label>1</label>
    </ligand>
</feature>
<feature type="binding site" evidence="2">
    <location>
        <position position="49"/>
    </location>
    <ligand>
        <name>[4Fe-4S] cluster</name>
        <dbReference type="ChEBI" id="CHEBI:49883"/>
        <label>1</label>
    </ligand>
</feature>
<feature type="binding site" evidence="2">
    <location>
        <position position="83"/>
    </location>
    <ligand>
        <name>[4Fe-4S] cluster</name>
        <dbReference type="ChEBI" id="CHEBI:49883"/>
        <label>1</label>
    </ligand>
</feature>
<feature type="binding site" evidence="7">
    <location>
        <position position="157"/>
    </location>
    <ligand>
        <name>[4Fe-4S] cluster</name>
        <dbReference type="ChEBI" id="CHEBI:49883"/>
        <label>2</label>
        <note>4Fe-4S-S-AdoMet</note>
    </ligand>
</feature>
<feature type="binding site" evidence="7">
    <location>
        <position position="161"/>
    </location>
    <ligand>
        <name>[4Fe-4S] cluster</name>
        <dbReference type="ChEBI" id="CHEBI:49883"/>
        <label>2</label>
        <note>4Fe-4S-S-AdoMet</note>
    </ligand>
</feature>
<feature type="binding site" evidence="7">
    <location>
        <position position="164"/>
    </location>
    <ligand>
        <name>[4Fe-4S] cluster</name>
        <dbReference type="ChEBI" id="CHEBI:49883"/>
        <label>2</label>
        <note>4Fe-4S-S-AdoMet</note>
    </ligand>
</feature>
<feature type="mutagenesis site" description="Loss of activity." evidence="5">
    <original>C</original>
    <variation>A</variation>
    <location>
        <position position="157"/>
    </location>
</feature>
<feature type="mutagenesis site" description="Loss of activity." evidence="5">
    <original>C</original>
    <variation>A</variation>
    <location>
        <position position="161"/>
    </location>
</feature>
<feature type="mutagenesis site" description="Loss of activity." evidence="5">
    <original>C</original>
    <variation>A</variation>
    <location>
        <position position="164"/>
    </location>
</feature>
<dbReference type="EC" id="2.8.4.3" evidence="2 8"/>
<dbReference type="EMBL" id="U82598">
    <property type="protein sequence ID" value="AAB40863.1"/>
    <property type="molecule type" value="Genomic_DNA"/>
</dbReference>
<dbReference type="EMBL" id="U00096">
    <property type="protein sequence ID" value="AAC73762.1"/>
    <property type="molecule type" value="Genomic_DNA"/>
</dbReference>
<dbReference type="EMBL" id="AP009048">
    <property type="protein sequence ID" value="BAE76357.1"/>
    <property type="molecule type" value="Genomic_DNA"/>
</dbReference>
<dbReference type="PIR" id="C64801">
    <property type="entry name" value="C64801"/>
</dbReference>
<dbReference type="RefSeq" id="NP_415194.1">
    <property type="nucleotide sequence ID" value="NC_000913.3"/>
</dbReference>
<dbReference type="RefSeq" id="WP_000162740.1">
    <property type="nucleotide sequence ID" value="NZ_STEB01000031.1"/>
</dbReference>
<dbReference type="SMR" id="P0AEI1"/>
<dbReference type="BioGRID" id="4261232">
    <property type="interactions" value="56"/>
</dbReference>
<dbReference type="DIP" id="DIP-48018N"/>
<dbReference type="FunCoup" id="P0AEI1">
    <property type="interactions" value="782"/>
</dbReference>
<dbReference type="IntAct" id="P0AEI1">
    <property type="interactions" value="15"/>
</dbReference>
<dbReference type="STRING" id="511145.b0661"/>
<dbReference type="jPOST" id="P0AEI1"/>
<dbReference type="PaxDb" id="511145-b0661"/>
<dbReference type="DNASU" id="945260"/>
<dbReference type="EnsemblBacteria" id="AAC73762">
    <property type="protein sequence ID" value="AAC73762"/>
    <property type="gene ID" value="b0661"/>
</dbReference>
<dbReference type="GeneID" id="86863171"/>
<dbReference type="GeneID" id="945260"/>
<dbReference type="KEGG" id="ecj:JW0658"/>
<dbReference type="KEGG" id="eco:b0661"/>
<dbReference type="KEGG" id="ecoc:C3026_03305"/>
<dbReference type="PATRIC" id="fig|1411691.4.peg.1607"/>
<dbReference type="EchoBASE" id="EB3421"/>
<dbReference type="eggNOG" id="COG0621">
    <property type="taxonomic scope" value="Bacteria"/>
</dbReference>
<dbReference type="HOGENOM" id="CLU_018697_2_0_6"/>
<dbReference type="InParanoid" id="P0AEI1"/>
<dbReference type="OMA" id="CEHFHIP"/>
<dbReference type="OrthoDB" id="9805215at2"/>
<dbReference type="PhylomeDB" id="P0AEI1"/>
<dbReference type="BioCyc" id="EcoCyc:G6364-MONOMER"/>
<dbReference type="BioCyc" id="MetaCyc:G6364-MONOMER"/>
<dbReference type="BRENDA" id="2.8.4.3">
    <property type="organism ID" value="2026"/>
</dbReference>
<dbReference type="PRO" id="PR:P0AEI1"/>
<dbReference type="Proteomes" id="UP000000625">
    <property type="component" value="Chromosome"/>
</dbReference>
<dbReference type="GO" id="GO:0005829">
    <property type="term" value="C:cytosol"/>
    <property type="evidence" value="ECO:0000314"/>
    <property type="project" value="EcoCyc"/>
</dbReference>
<dbReference type="GO" id="GO:0051539">
    <property type="term" value="F:4 iron, 4 sulfur cluster binding"/>
    <property type="evidence" value="ECO:0000314"/>
    <property type="project" value="EcoCyc"/>
</dbReference>
<dbReference type="GO" id="GO:0046872">
    <property type="term" value="F:metal ion binding"/>
    <property type="evidence" value="ECO:0007669"/>
    <property type="project" value="UniProtKB-KW"/>
</dbReference>
<dbReference type="GO" id="GO:0035597">
    <property type="term" value="F:N6-isopentenyladenosine methylthiotransferase activity"/>
    <property type="evidence" value="ECO:0000314"/>
    <property type="project" value="EcoCyc"/>
</dbReference>
<dbReference type="GO" id="GO:0030488">
    <property type="term" value="P:tRNA methylation"/>
    <property type="evidence" value="ECO:0000315"/>
    <property type="project" value="EcoCyc"/>
</dbReference>
<dbReference type="GO" id="GO:0035600">
    <property type="term" value="P:tRNA methylthiolation"/>
    <property type="evidence" value="ECO:0000318"/>
    <property type="project" value="GO_Central"/>
</dbReference>
<dbReference type="CDD" id="cd01335">
    <property type="entry name" value="Radical_SAM"/>
    <property type="match status" value="1"/>
</dbReference>
<dbReference type="FunFam" id="3.40.50.12160:FF:000001">
    <property type="entry name" value="tRNA-2-methylthio-N(6)-dimethylallyladenosine synthase"/>
    <property type="match status" value="1"/>
</dbReference>
<dbReference type="FunFam" id="3.80.30.20:FF:000001">
    <property type="entry name" value="tRNA-2-methylthio-N(6)-dimethylallyladenosine synthase 2"/>
    <property type="match status" value="1"/>
</dbReference>
<dbReference type="Gene3D" id="3.40.50.12160">
    <property type="entry name" value="Methylthiotransferase, N-terminal domain"/>
    <property type="match status" value="1"/>
</dbReference>
<dbReference type="Gene3D" id="3.80.30.20">
    <property type="entry name" value="tm_1862 like domain"/>
    <property type="match status" value="1"/>
</dbReference>
<dbReference type="HAMAP" id="MF_01864">
    <property type="entry name" value="tRNA_metthiotr_MiaB"/>
    <property type="match status" value="1"/>
</dbReference>
<dbReference type="InterPro" id="IPR006638">
    <property type="entry name" value="Elp3/MiaA/NifB-like_rSAM"/>
</dbReference>
<dbReference type="InterPro" id="IPR005839">
    <property type="entry name" value="Methylthiotransferase"/>
</dbReference>
<dbReference type="InterPro" id="IPR020612">
    <property type="entry name" value="Methylthiotransferase_CS"/>
</dbReference>
<dbReference type="InterPro" id="IPR013848">
    <property type="entry name" value="Methylthiotransferase_N"/>
</dbReference>
<dbReference type="InterPro" id="IPR038135">
    <property type="entry name" value="Methylthiotransferase_N_sf"/>
</dbReference>
<dbReference type="InterPro" id="IPR006463">
    <property type="entry name" value="MiaB_methiolase"/>
</dbReference>
<dbReference type="InterPro" id="IPR007197">
    <property type="entry name" value="rSAM"/>
</dbReference>
<dbReference type="InterPro" id="IPR023404">
    <property type="entry name" value="rSAM_horseshoe"/>
</dbReference>
<dbReference type="InterPro" id="IPR002792">
    <property type="entry name" value="TRAM_dom"/>
</dbReference>
<dbReference type="NCBIfam" id="TIGR01574">
    <property type="entry name" value="miaB-methiolase"/>
    <property type="match status" value="1"/>
</dbReference>
<dbReference type="NCBIfam" id="TIGR00089">
    <property type="entry name" value="MiaB/RimO family radical SAM methylthiotransferase"/>
    <property type="match status" value="1"/>
</dbReference>
<dbReference type="PANTHER" id="PTHR43020">
    <property type="entry name" value="CDK5 REGULATORY SUBUNIT-ASSOCIATED PROTEIN 1"/>
    <property type="match status" value="1"/>
</dbReference>
<dbReference type="PANTHER" id="PTHR43020:SF2">
    <property type="entry name" value="MITOCHONDRIAL TRNA METHYLTHIOTRANSFERASE CDK5RAP1"/>
    <property type="match status" value="1"/>
</dbReference>
<dbReference type="Pfam" id="PF04055">
    <property type="entry name" value="Radical_SAM"/>
    <property type="match status" value="1"/>
</dbReference>
<dbReference type="Pfam" id="PF01938">
    <property type="entry name" value="TRAM"/>
    <property type="match status" value="1"/>
</dbReference>
<dbReference type="Pfam" id="PF00919">
    <property type="entry name" value="UPF0004"/>
    <property type="match status" value="1"/>
</dbReference>
<dbReference type="SFLD" id="SFLDF00273">
    <property type="entry name" value="(dimethylallyl)adenosine_tRNA"/>
    <property type="match status" value="1"/>
</dbReference>
<dbReference type="SFLD" id="SFLDG01082">
    <property type="entry name" value="B12-binding_domain_containing"/>
    <property type="match status" value="1"/>
</dbReference>
<dbReference type="SFLD" id="SFLDS00029">
    <property type="entry name" value="Radical_SAM"/>
    <property type="match status" value="1"/>
</dbReference>
<dbReference type="SMART" id="SM00729">
    <property type="entry name" value="Elp3"/>
    <property type="match status" value="1"/>
</dbReference>
<dbReference type="SUPFAM" id="SSF102114">
    <property type="entry name" value="Radical SAM enzymes"/>
    <property type="match status" value="1"/>
</dbReference>
<dbReference type="PROSITE" id="PS51449">
    <property type="entry name" value="MTTASE_N"/>
    <property type="match status" value="1"/>
</dbReference>
<dbReference type="PROSITE" id="PS01278">
    <property type="entry name" value="MTTASE_RADICAL"/>
    <property type="match status" value="1"/>
</dbReference>
<dbReference type="PROSITE" id="PS51918">
    <property type="entry name" value="RADICAL_SAM"/>
    <property type="match status" value="1"/>
</dbReference>
<dbReference type="PROSITE" id="PS50926">
    <property type="entry name" value="TRAM"/>
    <property type="match status" value="1"/>
</dbReference>
<reference key="1">
    <citation type="submission" date="1997-01" db="EMBL/GenBank/DDBJ databases">
        <title>Sequence of minutes 4-25 of Escherichia coli.</title>
        <authorList>
            <person name="Chung E."/>
            <person name="Allen E."/>
            <person name="Araujo R."/>
            <person name="Aparicio A.M."/>
            <person name="Davis K."/>
            <person name="Duncan M."/>
            <person name="Federspiel N."/>
            <person name="Hyman R."/>
            <person name="Kalman S."/>
            <person name="Komp C."/>
            <person name="Kurdi O."/>
            <person name="Lew H."/>
            <person name="Lin D."/>
            <person name="Namath A."/>
            <person name="Oefner P."/>
            <person name="Roberts D."/>
            <person name="Schramm S."/>
            <person name="Davis R.W."/>
        </authorList>
    </citation>
    <scope>NUCLEOTIDE SEQUENCE [LARGE SCALE GENOMIC DNA]</scope>
    <source>
        <strain>K12 / MG1655 / ATCC 47076</strain>
    </source>
</reference>
<reference key="2">
    <citation type="journal article" date="1997" name="Science">
        <title>The complete genome sequence of Escherichia coli K-12.</title>
        <authorList>
            <person name="Blattner F.R."/>
            <person name="Plunkett G. III"/>
            <person name="Bloch C.A."/>
            <person name="Perna N.T."/>
            <person name="Burland V."/>
            <person name="Riley M."/>
            <person name="Collado-Vides J."/>
            <person name="Glasner J.D."/>
            <person name="Rode C.K."/>
            <person name="Mayhew G.F."/>
            <person name="Gregor J."/>
            <person name="Davis N.W."/>
            <person name="Kirkpatrick H.A."/>
            <person name="Goeden M.A."/>
            <person name="Rose D.J."/>
            <person name="Mau B."/>
            <person name="Shao Y."/>
        </authorList>
    </citation>
    <scope>NUCLEOTIDE SEQUENCE [LARGE SCALE GENOMIC DNA]</scope>
    <source>
        <strain>K12 / MG1655 / ATCC 47076</strain>
    </source>
</reference>
<reference key="3">
    <citation type="journal article" date="2006" name="Mol. Syst. Biol.">
        <title>Highly accurate genome sequences of Escherichia coli K-12 strains MG1655 and W3110.</title>
        <authorList>
            <person name="Hayashi K."/>
            <person name="Morooka N."/>
            <person name="Yamamoto Y."/>
            <person name="Fujita K."/>
            <person name="Isono K."/>
            <person name="Choi S."/>
            <person name="Ohtsubo E."/>
            <person name="Baba T."/>
            <person name="Wanner B.L."/>
            <person name="Mori H."/>
            <person name="Horiuchi T."/>
        </authorList>
    </citation>
    <scope>NUCLEOTIDE SEQUENCE [LARGE SCALE GENOMIC DNA]</scope>
    <source>
        <strain>K12 / W3110 / ATCC 27325 / DSM 5911</strain>
    </source>
</reference>
<reference key="4">
    <citation type="journal article" date="1999" name="J. Bacteriol.">
        <title>Identification of the miaB gene, involved in methylthiolation of isopentenylated A37 derivatives in the tRNA of Salmonella typhimurium and Escherichia coli.</title>
        <authorList>
            <person name="Esberg B."/>
            <person name="Leung H.-C.E."/>
            <person name="Tsui H.-C.T."/>
            <person name="Bjoerk G.R."/>
            <person name="Winkler M.E."/>
        </authorList>
    </citation>
    <scope>FUNCTION</scope>
</reference>
<reference key="5">
    <citation type="journal article" date="2002" name="J. Biol. Chem.">
        <title>Enzymatic modification of tRNAs: MiaB is an iron-sulfur protein.</title>
        <authorList>
            <person name="Pierrel F."/>
            <person name="Bjoerk G.R."/>
            <person name="Fontecave M."/>
            <person name="Atta M."/>
        </authorList>
    </citation>
    <scope>COFACTOR</scope>
    <scope>SUBUNIT</scope>
    <scope>MUTAGENESIS OF CYS-157; CYS-161 AND CYS-164</scope>
</reference>
<proteinExistence type="evidence at protein level"/>
<accession>P0AEI1</accession>
<accession>P77645</accession>
<accession>Q2MBJ9</accession>